<feature type="chain" id="PRO_0000230109" description="Transcriptional regulator MraZ">
    <location>
        <begin position="1"/>
        <end position="152"/>
    </location>
</feature>
<feature type="domain" description="SpoVT-AbrB 1" evidence="2">
    <location>
        <begin position="5"/>
        <end position="52"/>
    </location>
</feature>
<feature type="domain" description="SpoVT-AbrB 2" evidence="2">
    <location>
        <begin position="81"/>
        <end position="124"/>
    </location>
</feature>
<dbReference type="EMBL" id="CP000034">
    <property type="protein sequence ID" value="ABB60346.1"/>
    <property type="molecule type" value="Genomic_DNA"/>
</dbReference>
<dbReference type="RefSeq" id="WP_011378541.1">
    <property type="nucleotide sequence ID" value="NC_007606.1"/>
</dbReference>
<dbReference type="RefSeq" id="YP_401835.1">
    <property type="nucleotide sequence ID" value="NC_007606.1"/>
</dbReference>
<dbReference type="SMR" id="Q32K11"/>
<dbReference type="STRING" id="300267.SDY_0111"/>
<dbReference type="EnsemblBacteria" id="ABB60346">
    <property type="protein sequence ID" value="ABB60346"/>
    <property type="gene ID" value="SDY_0111"/>
</dbReference>
<dbReference type="KEGG" id="sdy:SDY_0111"/>
<dbReference type="PATRIC" id="fig|300267.13.peg.130"/>
<dbReference type="HOGENOM" id="CLU_107907_2_0_6"/>
<dbReference type="Proteomes" id="UP000002716">
    <property type="component" value="Chromosome"/>
</dbReference>
<dbReference type="GO" id="GO:0005737">
    <property type="term" value="C:cytoplasm"/>
    <property type="evidence" value="ECO:0007669"/>
    <property type="project" value="UniProtKB-UniRule"/>
</dbReference>
<dbReference type="GO" id="GO:0009295">
    <property type="term" value="C:nucleoid"/>
    <property type="evidence" value="ECO:0007669"/>
    <property type="project" value="UniProtKB-SubCell"/>
</dbReference>
<dbReference type="GO" id="GO:0003700">
    <property type="term" value="F:DNA-binding transcription factor activity"/>
    <property type="evidence" value="ECO:0007669"/>
    <property type="project" value="UniProtKB-UniRule"/>
</dbReference>
<dbReference type="GO" id="GO:0000976">
    <property type="term" value="F:transcription cis-regulatory region binding"/>
    <property type="evidence" value="ECO:0007669"/>
    <property type="project" value="TreeGrafter"/>
</dbReference>
<dbReference type="GO" id="GO:2000143">
    <property type="term" value="P:negative regulation of DNA-templated transcription initiation"/>
    <property type="evidence" value="ECO:0007669"/>
    <property type="project" value="TreeGrafter"/>
</dbReference>
<dbReference type="CDD" id="cd16321">
    <property type="entry name" value="MraZ_C"/>
    <property type="match status" value="1"/>
</dbReference>
<dbReference type="CDD" id="cd16320">
    <property type="entry name" value="MraZ_N"/>
    <property type="match status" value="1"/>
</dbReference>
<dbReference type="FunFam" id="3.40.1550.20:FF:000001">
    <property type="entry name" value="Transcriptional regulator MraZ"/>
    <property type="match status" value="1"/>
</dbReference>
<dbReference type="Gene3D" id="3.40.1550.20">
    <property type="entry name" value="Transcriptional regulator MraZ domain"/>
    <property type="match status" value="1"/>
</dbReference>
<dbReference type="HAMAP" id="MF_01008">
    <property type="entry name" value="MraZ"/>
    <property type="match status" value="1"/>
</dbReference>
<dbReference type="InterPro" id="IPR003444">
    <property type="entry name" value="MraZ"/>
</dbReference>
<dbReference type="InterPro" id="IPR035644">
    <property type="entry name" value="MraZ_C"/>
</dbReference>
<dbReference type="InterPro" id="IPR020603">
    <property type="entry name" value="MraZ_dom"/>
</dbReference>
<dbReference type="InterPro" id="IPR035642">
    <property type="entry name" value="MraZ_N"/>
</dbReference>
<dbReference type="InterPro" id="IPR038619">
    <property type="entry name" value="MraZ_sf"/>
</dbReference>
<dbReference type="InterPro" id="IPR007159">
    <property type="entry name" value="SpoVT-AbrB_dom"/>
</dbReference>
<dbReference type="InterPro" id="IPR037914">
    <property type="entry name" value="SpoVT-AbrB_sf"/>
</dbReference>
<dbReference type="NCBIfam" id="TIGR00242">
    <property type="entry name" value="division/cell wall cluster transcriptional repressor MraZ"/>
    <property type="match status" value="1"/>
</dbReference>
<dbReference type="PANTHER" id="PTHR34701">
    <property type="entry name" value="TRANSCRIPTIONAL REGULATOR MRAZ"/>
    <property type="match status" value="1"/>
</dbReference>
<dbReference type="PANTHER" id="PTHR34701:SF1">
    <property type="entry name" value="TRANSCRIPTIONAL REGULATOR MRAZ"/>
    <property type="match status" value="1"/>
</dbReference>
<dbReference type="Pfam" id="PF02381">
    <property type="entry name" value="MraZ"/>
    <property type="match status" value="2"/>
</dbReference>
<dbReference type="SUPFAM" id="SSF89447">
    <property type="entry name" value="AbrB/MazE/MraZ-like"/>
    <property type="match status" value="1"/>
</dbReference>
<dbReference type="PROSITE" id="PS51740">
    <property type="entry name" value="SPOVT_ABRB"/>
    <property type="match status" value="2"/>
</dbReference>
<sequence length="152" mass="17370">MFRGATLVNLDSKGRLSVPTRYREQLLENAAGQMVCTIDIHHPCLLLYPLPEWEIIEQKLPRLSSMNPVERRVQRLLLGHASECQMDGAGRLLIAPVLRQHAGLTKEVMLVGQFNKFELWDETTWHQQVKEDIDAEQLATGDLSERLQDLSL</sequence>
<accession>Q32K11</accession>
<organism>
    <name type="scientific">Shigella dysenteriae serotype 1 (strain Sd197)</name>
    <dbReference type="NCBI Taxonomy" id="300267"/>
    <lineage>
        <taxon>Bacteria</taxon>
        <taxon>Pseudomonadati</taxon>
        <taxon>Pseudomonadota</taxon>
        <taxon>Gammaproteobacteria</taxon>
        <taxon>Enterobacterales</taxon>
        <taxon>Enterobacteriaceae</taxon>
        <taxon>Shigella</taxon>
    </lineage>
</organism>
<protein>
    <recommendedName>
        <fullName>Transcriptional regulator MraZ</fullName>
    </recommendedName>
</protein>
<evidence type="ECO:0000255" key="1">
    <source>
        <dbReference type="HAMAP-Rule" id="MF_01008"/>
    </source>
</evidence>
<evidence type="ECO:0000255" key="2">
    <source>
        <dbReference type="PROSITE-ProRule" id="PRU01076"/>
    </source>
</evidence>
<comment type="function">
    <text evidence="1">Negatively regulates its own expression and that of the subsequent genes in the proximal part of the division and cell wall (dcw) gene cluster. Acts by binding directly to DNA. May also regulate the expression of genes outside the dcw cluster.</text>
</comment>
<comment type="subunit">
    <text evidence="1">Forms oligomers.</text>
</comment>
<comment type="subcellular location">
    <subcellularLocation>
        <location evidence="1">Cytoplasm</location>
        <location evidence="1">Nucleoid</location>
    </subcellularLocation>
</comment>
<comment type="similarity">
    <text evidence="1">Belongs to the MraZ family.</text>
</comment>
<proteinExistence type="inferred from homology"/>
<gene>
    <name evidence="1" type="primary">mraZ</name>
    <name type="ordered locus">SDY_0111</name>
</gene>
<keyword id="KW-0963">Cytoplasm</keyword>
<keyword id="KW-0238">DNA-binding</keyword>
<keyword id="KW-1185">Reference proteome</keyword>
<keyword id="KW-0677">Repeat</keyword>
<keyword id="KW-0678">Repressor</keyword>
<keyword id="KW-0804">Transcription</keyword>
<keyword id="KW-0805">Transcription regulation</keyword>
<name>MRAZ_SHIDS</name>
<reference key="1">
    <citation type="journal article" date="2005" name="Nucleic Acids Res.">
        <title>Genome dynamics and diversity of Shigella species, the etiologic agents of bacillary dysentery.</title>
        <authorList>
            <person name="Yang F."/>
            <person name="Yang J."/>
            <person name="Zhang X."/>
            <person name="Chen L."/>
            <person name="Jiang Y."/>
            <person name="Yan Y."/>
            <person name="Tang X."/>
            <person name="Wang J."/>
            <person name="Xiong Z."/>
            <person name="Dong J."/>
            <person name="Xue Y."/>
            <person name="Zhu Y."/>
            <person name="Xu X."/>
            <person name="Sun L."/>
            <person name="Chen S."/>
            <person name="Nie H."/>
            <person name="Peng J."/>
            <person name="Xu J."/>
            <person name="Wang Y."/>
            <person name="Yuan Z."/>
            <person name="Wen Y."/>
            <person name="Yao Z."/>
            <person name="Shen Y."/>
            <person name="Qiang B."/>
            <person name="Hou Y."/>
            <person name="Yu J."/>
            <person name="Jin Q."/>
        </authorList>
    </citation>
    <scope>NUCLEOTIDE SEQUENCE [LARGE SCALE GENOMIC DNA]</scope>
    <source>
        <strain>Sd197</strain>
    </source>
</reference>